<organism>
    <name type="scientific">Miopithecus talapoin</name>
    <name type="common">Angolan talapoin</name>
    <name type="synonym">Cercopithecus talapoin</name>
    <dbReference type="NCBI Taxonomy" id="36231"/>
    <lineage>
        <taxon>Eukaryota</taxon>
        <taxon>Metazoa</taxon>
        <taxon>Chordata</taxon>
        <taxon>Craniata</taxon>
        <taxon>Vertebrata</taxon>
        <taxon>Euteleostomi</taxon>
        <taxon>Mammalia</taxon>
        <taxon>Eutheria</taxon>
        <taxon>Euarchontoglires</taxon>
        <taxon>Primates</taxon>
        <taxon>Haplorrhini</taxon>
        <taxon>Catarrhini</taxon>
        <taxon>Cercopithecidae</taxon>
        <taxon>Cercopithecinae</taxon>
        <taxon>Miopithecus</taxon>
    </lineage>
</organism>
<evidence type="ECO:0000250" key="1"/>
<evidence type="ECO:0000250" key="2">
    <source>
        <dbReference type="UniProtKB" id="Q64438"/>
    </source>
</evidence>
<evidence type="ECO:0000250" key="3">
    <source>
        <dbReference type="UniProtKB" id="Q93091"/>
    </source>
</evidence>
<evidence type="ECO:0000250" key="4">
    <source>
        <dbReference type="UniProtKB" id="Q9H1E1"/>
    </source>
</evidence>
<evidence type="ECO:0000255" key="5"/>
<evidence type="ECO:0000305" key="6"/>
<name>RNAS6_MIOTA</name>
<feature type="signal peptide" evidence="1">
    <location>
        <begin position="1"/>
        <end position="23"/>
    </location>
</feature>
<feature type="chain" id="PRO_0000030894" description="Ribonuclease K6">
    <location>
        <begin position="24"/>
        <end position="150"/>
    </location>
</feature>
<feature type="active site" description="Proton acceptor" evidence="2">
    <location>
        <position position="38"/>
    </location>
</feature>
<feature type="active site" description="Proton donor" evidence="2">
    <location>
        <position position="145"/>
    </location>
</feature>
<feature type="binding site" evidence="1">
    <location>
        <begin position="61"/>
        <end position="65"/>
    </location>
    <ligand>
        <name>substrate</name>
    </ligand>
</feature>
<feature type="binding site" evidence="1">
    <location>
        <position position="86"/>
    </location>
    <ligand>
        <name>substrate</name>
    </ligand>
</feature>
<feature type="binding site" evidence="1">
    <location>
        <position position="105"/>
    </location>
    <ligand>
        <name>substrate</name>
    </ligand>
</feature>
<feature type="site" description="Facilitates cleavage of polynucleotide substrates" evidence="3">
    <location>
        <position position="59"/>
    </location>
</feature>
<feature type="site" description="Critical for catalytic activity" evidence="4">
    <location>
        <position position="61"/>
    </location>
</feature>
<feature type="glycosylation site" description="N-linked (GlcNAc...) asparagine" evidence="5">
    <location>
        <position position="55"/>
    </location>
</feature>
<feature type="glycosylation site" description="N-linked (GlcNAc...) asparagine" evidence="5">
    <location>
        <position position="100"/>
    </location>
</feature>
<feature type="disulfide bond" evidence="3">
    <location>
        <begin position="46"/>
        <end position="104"/>
    </location>
</feature>
<feature type="disulfide bond" evidence="3">
    <location>
        <begin position="60"/>
        <end position="114"/>
    </location>
</feature>
<feature type="disulfide bond" evidence="3">
    <location>
        <begin position="78"/>
        <end position="129"/>
    </location>
</feature>
<feature type="disulfide bond" evidence="3">
    <location>
        <begin position="85"/>
        <end position="92"/>
    </location>
</feature>
<protein>
    <recommendedName>
        <fullName>Ribonuclease K6</fullName>
        <shortName>RNase K6</shortName>
        <ecNumber>3.1.27.-</ecNumber>
    </recommendedName>
</protein>
<dbReference type="EC" id="3.1.27.-"/>
<dbReference type="EMBL" id="AF037087">
    <property type="protein sequence ID" value="AAB94749.1"/>
    <property type="molecule type" value="Genomic_DNA"/>
</dbReference>
<dbReference type="SMR" id="O46531"/>
<dbReference type="GlyCosmos" id="O46531">
    <property type="glycosylation" value="2 sites, No reported glycans"/>
</dbReference>
<dbReference type="GO" id="GO:0005615">
    <property type="term" value="C:extracellular space"/>
    <property type="evidence" value="ECO:0007669"/>
    <property type="project" value="TreeGrafter"/>
</dbReference>
<dbReference type="GO" id="GO:0005764">
    <property type="term" value="C:lysosome"/>
    <property type="evidence" value="ECO:0007669"/>
    <property type="project" value="UniProtKB-SubCell"/>
</dbReference>
<dbReference type="GO" id="GO:0004519">
    <property type="term" value="F:endonuclease activity"/>
    <property type="evidence" value="ECO:0007669"/>
    <property type="project" value="UniProtKB-KW"/>
</dbReference>
<dbReference type="GO" id="GO:0003676">
    <property type="term" value="F:nucleic acid binding"/>
    <property type="evidence" value="ECO:0007669"/>
    <property type="project" value="InterPro"/>
</dbReference>
<dbReference type="GO" id="GO:0004540">
    <property type="term" value="F:RNA nuclease activity"/>
    <property type="evidence" value="ECO:0007669"/>
    <property type="project" value="TreeGrafter"/>
</dbReference>
<dbReference type="GO" id="GO:0019731">
    <property type="term" value="P:antibacterial humoral response"/>
    <property type="evidence" value="ECO:0007669"/>
    <property type="project" value="TreeGrafter"/>
</dbReference>
<dbReference type="GO" id="GO:0061844">
    <property type="term" value="P:antimicrobial humoral immune response mediated by antimicrobial peptide"/>
    <property type="evidence" value="ECO:0007669"/>
    <property type="project" value="TreeGrafter"/>
</dbReference>
<dbReference type="GO" id="GO:0050829">
    <property type="term" value="P:defense response to Gram-negative bacterium"/>
    <property type="evidence" value="ECO:0007669"/>
    <property type="project" value="TreeGrafter"/>
</dbReference>
<dbReference type="GO" id="GO:0050830">
    <property type="term" value="P:defense response to Gram-positive bacterium"/>
    <property type="evidence" value="ECO:0007669"/>
    <property type="project" value="TreeGrafter"/>
</dbReference>
<dbReference type="GO" id="GO:0045087">
    <property type="term" value="P:innate immune response"/>
    <property type="evidence" value="ECO:0007669"/>
    <property type="project" value="TreeGrafter"/>
</dbReference>
<dbReference type="CDD" id="cd06265">
    <property type="entry name" value="RNase_A_canonical"/>
    <property type="match status" value="1"/>
</dbReference>
<dbReference type="FunFam" id="3.10.130.10:FF:000001">
    <property type="entry name" value="Ribonuclease pancreatic"/>
    <property type="match status" value="1"/>
</dbReference>
<dbReference type="Gene3D" id="3.10.130.10">
    <property type="entry name" value="Ribonuclease A-like domain"/>
    <property type="match status" value="1"/>
</dbReference>
<dbReference type="InterPro" id="IPR001427">
    <property type="entry name" value="RNaseA"/>
</dbReference>
<dbReference type="InterPro" id="IPR036816">
    <property type="entry name" value="RNaseA-like_dom_sf"/>
</dbReference>
<dbReference type="InterPro" id="IPR023411">
    <property type="entry name" value="RNaseA_AS"/>
</dbReference>
<dbReference type="InterPro" id="IPR023412">
    <property type="entry name" value="RNaseA_domain"/>
</dbReference>
<dbReference type="PANTHER" id="PTHR11437">
    <property type="entry name" value="RIBONUCLEASE"/>
    <property type="match status" value="1"/>
</dbReference>
<dbReference type="PANTHER" id="PTHR11437:SF4">
    <property type="entry name" value="RIBONUCLEASE K6"/>
    <property type="match status" value="1"/>
</dbReference>
<dbReference type="Pfam" id="PF00074">
    <property type="entry name" value="RnaseA"/>
    <property type="match status" value="1"/>
</dbReference>
<dbReference type="PRINTS" id="PR00794">
    <property type="entry name" value="RIBONUCLEASE"/>
</dbReference>
<dbReference type="SMART" id="SM00092">
    <property type="entry name" value="RNAse_Pc"/>
    <property type="match status" value="1"/>
</dbReference>
<dbReference type="SUPFAM" id="SSF54076">
    <property type="entry name" value="RNase A-like"/>
    <property type="match status" value="1"/>
</dbReference>
<dbReference type="PROSITE" id="PS00127">
    <property type="entry name" value="RNASE_PANCREATIC"/>
    <property type="match status" value="1"/>
</dbReference>
<reference key="1">
    <citation type="journal article" date="1998" name="Genome Res.">
        <title>Ribonuclease k6: chromosomal mapping and divergent rates of evolution within the RNase A gene superfamily.</title>
        <authorList>
            <person name="Deming M.S."/>
            <person name="Dyer K.D."/>
            <person name="Bankier A.T."/>
            <person name="Piper M.B."/>
            <person name="Dear P.H."/>
            <person name="Rosenberg H.F."/>
        </authorList>
    </citation>
    <scope>NUCLEOTIDE SEQUENCE [GENOMIC DNA]</scope>
</reference>
<keyword id="KW-0044">Antibiotic</keyword>
<keyword id="KW-0929">Antimicrobial</keyword>
<keyword id="KW-1015">Disulfide bond</keyword>
<keyword id="KW-0255">Endonuclease</keyword>
<keyword id="KW-0325">Glycoprotein</keyword>
<keyword id="KW-0378">Hydrolase</keyword>
<keyword id="KW-0458">Lysosome</keyword>
<keyword id="KW-0540">Nuclease</keyword>
<keyword id="KW-0964">Secreted</keyword>
<keyword id="KW-0732">Signal</keyword>
<gene>
    <name type="primary">RNASE6</name>
</gene>
<comment type="function">
    <text evidence="3">Ribonuclease which shows a preference for the pyrimidines uridine and cytosine. Has potent antibacterial activity against a range of Gram-positive and Gram-negative bacteria, including P.aeruginosa, A.baumanii, M.luteus, S.aureus, E.faecalis, E.faecium, S.saprophyticus and E.coli. Causes loss of bacterial membrane integrity, and also promotes agglutination of Gram-negative bacteria. Probably contributes to urinary tract sterility. Bactericidal activity is independent of RNase activity.</text>
</comment>
<comment type="subunit">
    <text evidence="3">Interacts (via N-terminus) with bacterial lipopolysaccharide (LPS).</text>
</comment>
<comment type="subcellular location">
    <subcellularLocation>
        <location evidence="3">Secreted</location>
    </subcellularLocation>
    <subcellularLocation>
        <location evidence="3">Lysosome</location>
    </subcellularLocation>
    <subcellularLocation>
        <location evidence="3">Cytoplasmic granule</location>
    </subcellularLocation>
</comment>
<comment type="similarity">
    <text evidence="6">Belongs to the pancreatic ribonuclease family.</text>
</comment>
<accession>O46531</accession>
<sequence>MVLCFPLLLLLLVLWGPVCLLHAWPKHLTRAHWFEIQHIQPSPLQCNRAMSGINNYTQHCKHQNTFRHDSFQNVAAVCDLLSIICKNRQHNCHQSSKPVNMTDCRLTSGKYPQCRHSAAAQYKFFIIACDPPQKSDPPYKLVPVHLDSIL</sequence>
<proteinExistence type="inferred from homology"/>